<gene>
    <name evidence="4" type="primary">pao</name>
    <name type="synonym">amo</name>
</gene>
<keyword id="KW-0017">Alkaloid metabolism</keyword>
<keyword id="KW-0274">FAD</keyword>
<keyword id="KW-0285">Flavoprotein</keyword>
<keyword id="KW-0560">Oxidoreductase</keyword>
<keyword id="KW-0574">Periplasm</keyword>
<keyword id="KW-0732">Signal</keyword>
<evidence type="ECO:0000250" key="1">
    <source>
        <dbReference type="UniProtKB" id="F8G0P1"/>
    </source>
</evidence>
<evidence type="ECO:0000255" key="2">
    <source>
        <dbReference type="PROSITE-ProRule" id="PRU00648"/>
    </source>
</evidence>
<evidence type="ECO:0000269" key="3">
    <source>
    </source>
</evidence>
<evidence type="ECO:0000303" key="4">
    <source>
    </source>
</evidence>
<evidence type="ECO:0000305" key="5"/>
<evidence type="ECO:0000305" key="6">
    <source>
    </source>
</evidence>
<reference key="1">
    <citation type="journal article" date="2012" name="Appl. Environ. Microbiol.">
        <title>Functional identification of two novel genes from Pseudomonas sp. strain HZN6 involved in the catabolism of nicotine.</title>
        <authorList>
            <person name="Qiu J."/>
            <person name="Ma Y."/>
            <person name="Wen Y."/>
            <person name="Chen L."/>
            <person name="Wu L."/>
            <person name="Liu W."/>
        </authorList>
    </citation>
    <scope>NUCLEOTIDE SEQUENCE [GENOMIC DNA]</scope>
    <scope>FUNCTION</scope>
    <scope>CATALYTIC ACTIVITY</scope>
    <scope>COFACTOR</scope>
    <scope>BIOPHYSICOCHEMICAL PROPERTIES</scope>
    <scope>PATHWAY</scope>
    <scope>ACTIVITY REGULATION</scope>
    <scope>SUBUNIT</scope>
    <source>
        <strain>HZN6</strain>
    </source>
</reference>
<organism>
    <name type="scientific">Pseudomonas sp</name>
    <dbReference type="NCBI Taxonomy" id="306"/>
    <lineage>
        <taxon>Bacteria</taxon>
        <taxon>Pseudomonadati</taxon>
        <taxon>Pseudomonadota</taxon>
        <taxon>Gammaproteobacteria</taxon>
        <taxon>Pseudomonadales</taxon>
        <taxon>Pseudomonadaceae</taxon>
        <taxon>Pseudomonas</taxon>
    </lineage>
</organism>
<accession>H8ZPX1</accession>
<name>PNAO_PSESP</name>
<comment type="function">
    <text evidence="3">Involved in nicotine degradation (PubMed:22267672). Catalyzes the deamination of pseudooxynicotine to 3-succinoylsemialdehyde-pyridine (PubMed:22267672).</text>
</comment>
<comment type="catalytic activity">
    <reaction evidence="6">
        <text>pseudooxynicotine + 2 Fe(III)-[cytochrome c] + H2O = 4-oxo-4-(pyridin-3-yl)butanal + methylamine + 2 Fe(II)-[cytochrome c] + 2 H(+)</text>
        <dbReference type="Rhea" id="RHEA:75351"/>
        <dbReference type="Rhea" id="RHEA-COMP:10350"/>
        <dbReference type="Rhea" id="RHEA-COMP:14399"/>
        <dbReference type="ChEBI" id="CHEBI:15377"/>
        <dbReference type="ChEBI" id="CHEBI:15378"/>
        <dbReference type="ChEBI" id="CHEBI:29033"/>
        <dbReference type="ChEBI" id="CHEBI:29034"/>
        <dbReference type="ChEBI" id="CHEBI:59338"/>
        <dbReference type="ChEBI" id="CHEBI:66878"/>
        <dbReference type="ChEBI" id="CHEBI:66879"/>
        <dbReference type="EC" id="1.4.2.3"/>
    </reaction>
    <physiologicalReaction direction="left-to-right" evidence="6">
        <dbReference type="Rhea" id="RHEA:75352"/>
    </physiologicalReaction>
</comment>
<comment type="cofactor">
    <cofactor evidence="3">
        <name>FAD</name>
        <dbReference type="ChEBI" id="CHEBI:57692"/>
    </cofactor>
    <text evidence="1">Binds 1 FAD per subunit.</text>
</comment>
<comment type="activity regulation">
    <text evidence="3">Strongly inhibited by Ag(+), Co(2+), Cu(2+) and Hg(2+).</text>
</comment>
<comment type="biophysicochemical properties">
    <kinetics>
        <KM evidence="3">0.247 mM for pseudooxynicotine</KM>
        <text evidence="3">kcat is 151 sec(-1) with pseudooxynicotine as substrate.</text>
    </kinetics>
    <phDependence>
        <text evidence="3">Optimum pH is 8.0.</text>
    </phDependence>
    <temperatureDependence>
        <text evidence="3">Optimum temperature is 35 degrees Celsius.</text>
    </temperatureDependence>
</comment>
<comment type="pathway">
    <text evidence="3">Alkaloid degradation; nicotine degradation.</text>
</comment>
<comment type="subunit">
    <text evidence="3">Homodimer.</text>
</comment>
<comment type="subcellular location">
    <subcellularLocation>
        <location evidence="5">Periplasm</location>
    </subcellularLocation>
</comment>
<comment type="PTM">
    <text evidence="2">Predicted to be exported by the Tat system. The position of the signal peptide cleavage has not been experimentally proven.</text>
</comment>
<comment type="similarity">
    <text evidence="5">Belongs to the flavin monoamine oxidase family.</text>
</comment>
<comment type="caution">
    <text evidence="5">Was originally thought to act as an oxidase, but it was shown later in Pseudomonas putida S16 (AC F8G0P1) that this enzyme actually functions as a dehydrogenase, using a cytochrome c as the natural electron acceptor.</text>
</comment>
<proteinExistence type="evidence at protein level"/>
<sequence length="497" mass="54101">MANDKGDISKDGVSRRKFLGGAVIGAAAAAGVGSQILSLSATAQGADKERVGPLQSNVDYDAVVIGGGFAGVTAARELSRSGLKTLVLEGRSRLGGRTFTSKLDGEKVELGGTWVHWTQPNVWTEVMHYGLEIEETVGLASPETVIWVTDNQVKRAPAAEAFEIFGAACTEYYKEAHNIYPRPFDPFFAKKALQEMDGLSASEYLNKLSLTREQKDMMDSWLSGNGHNYPETIAYSEIMRWFALSNFNMPTMFDSIARYKIKSGTVSLLEAMVAESDMEVQLSTPVLKVKQDSHRVLITTEEGTIAASAVVMAVPLNTMGDVEYSPRLSDAKSEIASQGHAGKGVKGYIRIKQDVGNVMTYAPARNDVTPFTSVFTDHVGENGTLLIAFSADPKLVDINDSKAVEKALHPLLPGVEVTSSYGYDWNLDPFSKGTWCTYRPGQTTRYLTELQKREGRLFFAGSDMANGWRGFIDGAIESGREVGYQVASYLKGKNSNA</sequence>
<feature type="signal peptide" description="Tat-type signal" evidence="2">
    <location>
        <begin position="1"/>
        <end position="43"/>
    </location>
</feature>
<feature type="chain" id="PRO_0000421821" description="Pseudooxynicotine dehydrogenase">
    <location>
        <begin position="44"/>
        <end position="497"/>
    </location>
</feature>
<feature type="binding site" evidence="1">
    <location>
        <position position="70"/>
    </location>
    <ligand>
        <name>FAD</name>
        <dbReference type="ChEBI" id="CHEBI:57692"/>
    </ligand>
</feature>
<feature type="binding site" evidence="1">
    <location>
        <position position="89"/>
    </location>
    <ligand>
        <name>FAD</name>
        <dbReference type="ChEBI" id="CHEBI:57692"/>
    </ligand>
</feature>
<feature type="binding site" evidence="1">
    <location>
        <position position="97"/>
    </location>
    <ligand>
        <name>FAD</name>
        <dbReference type="ChEBI" id="CHEBI:57692"/>
    </ligand>
</feature>
<feature type="binding site" evidence="1">
    <location>
        <position position="114"/>
    </location>
    <ligand>
        <name>FAD</name>
        <dbReference type="ChEBI" id="CHEBI:57692"/>
    </ligand>
</feature>
<feature type="binding site" evidence="1">
    <location>
        <position position="286"/>
    </location>
    <ligand>
        <name>FAD</name>
        <dbReference type="ChEBI" id="CHEBI:57692"/>
    </ligand>
</feature>
<feature type="binding site" evidence="1">
    <location>
        <position position="462"/>
    </location>
    <ligand>
        <name>FAD</name>
        <dbReference type="ChEBI" id="CHEBI:57692"/>
    </ligand>
</feature>
<feature type="binding site" evidence="1">
    <location>
        <position position="472"/>
    </location>
    <ligand>
        <name>FAD</name>
        <dbReference type="ChEBI" id="CHEBI:57692"/>
    </ligand>
</feature>
<protein>
    <recommendedName>
        <fullName evidence="5">Pseudooxynicotine dehydrogenase</fullName>
        <ecNumber evidence="6">1.4.2.3</ecNumber>
    </recommendedName>
    <alternativeName>
        <fullName evidence="4">Pseudooxynicotine amine oxidase</fullName>
        <shortName evidence="4">PNAO</shortName>
    </alternativeName>
</protein>
<dbReference type="EC" id="1.4.2.3" evidence="6"/>
<dbReference type="EMBL" id="JN391188">
    <property type="protein sequence ID" value="AFD54463.1"/>
    <property type="molecule type" value="Genomic_DNA"/>
</dbReference>
<dbReference type="SMR" id="H8ZPX1"/>
<dbReference type="KEGG" id="ag:AFD54463"/>
<dbReference type="BRENDA" id="1.4.3.24">
    <property type="organism ID" value="5085"/>
</dbReference>
<dbReference type="UniPathway" id="UPA00106"/>
<dbReference type="GO" id="GO:0042597">
    <property type="term" value="C:periplasmic space"/>
    <property type="evidence" value="ECO:0007669"/>
    <property type="project" value="UniProtKB-SubCell"/>
</dbReference>
<dbReference type="GO" id="GO:0071949">
    <property type="term" value="F:FAD binding"/>
    <property type="evidence" value="ECO:0000314"/>
    <property type="project" value="UniProtKB"/>
</dbReference>
<dbReference type="GO" id="GO:0016641">
    <property type="term" value="F:oxidoreductase activity, acting on the CH-NH2 group of donors, oxygen as acceptor"/>
    <property type="evidence" value="ECO:0000314"/>
    <property type="project" value="UniProtKB"/>
</dbReference>
<dbReference type="GO" id="GO:0009820">
    <property type="term" value="P:alkaloid metabolic process"/>
    <property type="evidence" value="ECO:0007669"/>
    <property type="project" value="UniProtKB-KW"/>
</dbReference>
<dbReference type="GO" id="GO:0019608">
    <property type="term" value="P:nicotine catabolic process"/>
    <property type="evidence" value="ECO:0000314"/>
    <property type="project" value="UniProtKB"/>
</dbReference>
<dbReference type="Gene3D" id="3.90.660.10">
    <property type="match status" value="1"/>
</dbReference>
<dbReference type="Gene3D" id="3.50.50.60">
    <property type="entry name" value="FAD/NAD(P)-binding domain"/>
    <property type="match status" value="1"/>
</dbReference>
<dbReference type="Gene3D" id="1.10.405.10">
    <property type="entry name" value="Guanine Nucleotide Dissociation Inhibitor, domain 1"/>
    <property type="match status" value="1"/>
</dbReference>
<dbReference type="InterPro" id="IPR002937">
    <property type="entry name" value="Amino_oxidase"/>
</dbReference>
<dbReference type="InterPro" id="IPR036188">
    <property type="entry name" value="FAD/NAD-bd_sf"/>
</dbReference>
<dbReference type="InterPro" id="IPR001613">
    <property type="entry name" value="Flavin_amine_oxidase"/>
</dbReference>
<dbReference type="InterPro" id="IPR050703">
    <property type="entry name" value="Flavin_MAO"/>
</dbReference>
<dbReference type="InterPro" id="IPR006311">
    <property type="entry name" value="TAT_signal"/>
</dbReference>
<dbReference type="PANTHER" id="PTHR43563">
    <property type="entry name" value="AMINE OXIDASE"/>
    <property type="match status" value="1"/>
</dbReference>
<dbReference type="PANTHER" id="PTHR43563:SF1">
    <property type="entry name" value="AMINE OXIDASE [FLAVIN-CONTAINING] B"/>
    <property type="match status" value="1"/>
</dbReference>
<dbReference type="Pfam" id="PF01593">
    <property type="entry name" value="Amino_oxidase"/>
    <property type="match status" value="1"/>
</dbReference>
<dbReference type="PRINTS" id="PR00757">
    <property type="entry name" value="AMINEOXDASEF"/>
</dbReference>
<dbReference type="SUPFAM" id="SSF51905">
    <property type="entry name" value="FAD/NAD(P)-binding domain"/>
    <property type="match status" value="1"/>
</dbReference>
<dbReference type="PROSITE" id="PS51318">
    <property type="entry name" value="TAT"/>
    <property type="match status" value="1"/>
</dbReference>